<keyword id="KW-0143">Chaperone</keyword>
<keyword id="KW-0963">Cytoplasm</keyword>
<keyword id="KW-0235">DNA replication</keyword>
<keyword id="KW-0479">Metal-binding</keyword>
<keyword id="KW-1185">Reference proteome</keyword>
<keyword id="KW-0677">Repeat</keyword>
<keyword id="KW-0346">Stress response</keyword>
<keyword id="KW-0862">Zinc</keyword>
<accession>P50026</accession>
<accession>Q31K10</accession>
<name>DNAJ_SYNE7</name>
<organism>
    <name type="scientific">Synechococcus elongatus (strain ATCC 33912 / PCC 7942 / FACHB-805)</name>
    <name type="common">Anacystis nidulans R2</name>
    <dbReference type="NCBI Taxonomy" id="1140"/>
    <lineage>
        <taxon>Bacteria</taxon>
        <taxon>Bacillati</taxon>
        <taxon>Cyanobacteriota</taxon>
        <taxon>Cyanophyceae</taxon>
        <taxon>Synechococcales</taxon>
        <taxon>Synechococcaceae</taxon>
        <taxon>Synechococcus</taxon>
    </lineage>
</organism>
<proteinExistence type="inferred from homology"/>
<reference key="1">
    <citation type="journal article" date="1997" name="Biochem. Biophys. Res. Commun.">
        <title>Sequence and analysis of a dnaJ homologue gene in cyanobacterium Synechococcus sp. PCC7942.</title>
        <authorList>
            <person name="Oguchi K."/>
            <person name="Nimura K."/>
            <person name="Yoshikawa H."/>
            <person name="Takahashi H."/>
        </authorList>
    </citation>
    <scope>NUCLEOTIDE SEQUENCE [GENOMIC DNA]</scope>
</reference>
<reference key="2">
    <citation type="submission" date="2005-08" db="EMBL/GenBank/DDBJ databases">
        <title>Complete sequence of chromosome 1 of Synechococcus elongatus PCC 7942.</title>
        <authorList>
            <consortium name="US DOE Joint Genome Institute"/>
            <person name="Copeland A."/>
            <person name="Lucas S."/>
            <person name="Lapidus A."/>
            <person name="Barry K."/>
            <person name="Detter J.C."/>
            <person name="Glavina T."/>
            <person name="Hammon N."/>
            <person name="Israni S."/>
            <person name="Pitluck S."/>
            <person name="Schmutz J."/>
            <person name="Larimer F."/>
            <person name="Land M."/>
            <person name="Kyrpides N."/>
            <person name="Lykidis A."/>
            <person name="Golden S."/>
            <person name="Richardson P."/>
        </authorList>
    </citation>
    <scope>NUCLEOTIDE SEQUENCE [LARGE SCALE GENOMIC DNA]</scope>
    <source>
        <strain>ATCC 33912 / PCC 7942 / FACHB-805</strain>
    </source>
</reference>
<reference key="3">
    <citation type="journal article" date="1994" name="Biochem. Biophys. Res. Commun.">
        <title>Sequence analysis of the third dnaK homolog gene in Synechococcus sp. PCC7942.</title>
        <authorList>
            <person name="Nimura K."/>
            <person name="Yoshikawa H."/>
            <person name="Takahashi H."/>
        </authorList>
    </citation>
    <scope>NUCLEOTIDE SEQUENCE [GENOMIC DNA] OF 1-189</scope>
</reference>
<reference key="4">
    <citation type="journal article" date="1994" name="Biochem. Biophys. Res. Commun.">
        <authorList>
            <person name="Nimura K."/>
            <person name="Yoshikawa H."/>
            <person name="Takahashi H."/>
        </authorList>
    </citation>
    <scope>ERRATUM OF PUBMED:8003021</scope>
</reference>
<protein>
    <recommendedName>
        <fullName>Chaperone protein DnaJ</fullName>
    </recommendedName>
</protein>
<sequence length="287" mass="31980">MQNFRDYYALLGIPQSADQAAIKAAFRKLARQCHPDLNPGDRQAEERFKQISEAYEILSDPDRRAEYQRFSRYWQQQGAASVGSDDDYGDFPDFDIFVDELLGRRTVERSPRRSARRSAATSSALSRDLERSLEVDPKTALQGGSAQLQLEDGRLLEVDIPAGIQAGEYLRLRGQGIKGGDLLLRVQLQASNFQVQGSDVIYTLNVSPAMAVLGGQVTVPTLDGPVQMKLPASLRSGQRLRLAGKGYSKPSGDRGDQIVVIQLQLPTRLSPEERQLYEQLRSLEQSR</sequence>
<feature type="chain" id="PRO_0000070913" description="Chaperone protein DnaJ">
    <location>
        <begin position="1"/>
        <end position="287"/>
    </location>
</feature>
<feature type="domain" description="J" evidence="2">
    <location>
        <begin position="6"/>
        <end position="71"/>
    </location>
</feature>
<feature type="region of interest" description="Disordered" evidence="3">
    <location>
        <begin position="108"/>
        <end position="131"/>
    </location>
</feature>
<feature type="compositionally biased region" description="Low complexity" evidence="3">
    <location>
        <begin position="117"/>
        <end position="126"/>
    </location>
</feature>
<dbReference type="EMBL" id="AB003519">
    <property type="protein sequence ID" value="BAA21679.1"/>
    <property type="molecule type" value="Genomic_DNA"/>
</dbReference>
<dbReference type="EMBL" id="CP000100">
    <property type="protein sequence ID" value="ABB58609.1"/>
    <property type="status" value="ALT_INIT"/>
    <property type="molecule type" value="Genomic_DNA"/>
</dbReference>
<dbReference type="EMBL" id="D29968">
    <property type="protein sequence ID" value="BAA06235.1"/>
    <property type="molecule type" value="Genomic_DNA"/>
</dbReference>
<dbReference type="PIR" id="JC5550">
    <property type="entry name" value="JC5550"/>
</dbReference>
<dbReference type="PIR" id="PC2306">
    <property type="entry name" value="PC2306"/>
</dbReference>
<dbReference type="SMR" id="P50026"/>
<dbReference type="STRING" id="1140.Synpcc7942_2579"/>
<dbReference type="PaxDb" id="1140-Synpcc7942_2579"/>
<dbReference type="KEGG" id="syf:Synpcc7942_2579"/>
<dbReference type="eggNOG" id="COG0484">
    <property type="taxonomic scope" value="Bacteria"/>
</dbReference>
<dbReference type="HOGENOM" id="CLU_017633_0_0_3"/>
<dbReference type="BioCyc" id="SYNEL:SYNPCC7942_2579-MONOMER"/>
<dbReference type="Proteomes" id="UP000889800">
    <property type="component" value="Chromosome"/>
</dbReference>
<dbReference type="GO" id="GO:0005737">
    <property type="term" value="C:cytoplasm"/>
    <property type="evidence" value="ECO:0007669"/>
    <property type="project" value="UniProtKB-SubCell"/>
</dbReference>
<dbReference type="GO" id="GO:0046872">
    <property type="term" value="F:metal ion binding"/>
    <property type="evidence" value="ECO:0007669"/>
    <property type="project" value="UniProtKB-KW"/>
</dbReference>
<dbReference type="GO" id="GO:0051082">
    <property type="term" value="F:unfolded protein binding"/>
    <property type="evidence" value="ECO:0007669"/>
    <property type="project" value="InterPro"/>
</dbReference>
<dbReference type="GO" id="GO:0051085">
    <property type="term" value="P:chaperone cofactor-dependent protein refolding"/>
    <property type="evidence" value="ECO:0007669"/>
    <property type="project" value="TreeGrafter"/>
</dbReference>
<dbReference type="GO" id="GO:0006260">
    <property type="term" value="P:DNA replication"/>
    <property type="evidence" value="ECO:0007669"/>
    <property type="project" value="UniProtKB-KW"/>
</dbReference>
<dbReference type="GO" id="GO:0042026">
    <property type="term" value="P:protein refolding"/>
    <property type="evidence" value="ECO:0007669"/>
    <property type="project" value="TreeGrafter"/>
</dbReference>
<dbReference type="CDD" id="cd06257">
    <property type="entry name" value="DnaJ"/>
    <property type="match status" value="1"/>
</dbReference>
<dbReference type="CDD" id="cd10747">
    <property type="entry name" value="DnaJ_C"/>
    <property type="match status" value="1"/>
</dbReference>
<dbReference type="FunFam" id="2.60.260.20:FF:000013">
    <property type="entry name" value="DnaJ subfamily B member 11"/>
    <property type="match status" value="1"/>
</dbReference>
<dbReference type="Gene3D" id="1.10.287.110">
    <property type="entry name" value="DnaJ domain"/>
    <property type="match status" value="1"/>
</dbReference>
<dbReference type="Gene3D" id="2.60.260.20">
    <property type="entry name" value="Urease metallochaperone UreE, N-terminal domain"/>
    <property type="match status" value="2"/>
</dbReference>
<dbReference type="InterPro" id="IPR002939">
    <property type="entry name" value="DnaJ_C"/>
</dbReference>
<dbReference type="InterPro" id="IPR001623">
    <property type="entry name" value="DnaJ_domain"/>
</dbReference>
<dbReference type="InterPro" id="IPR018253">
    <property type="entry name" value="DnaJ_domain_CS"/>
</dbReference>
<dbReference type="InterPro" id="IPR008971">
    <property type="entry name" value="HSP40/DnaJ_pept-bd"/>
</dbReference>
<dbReference type="InterPro" id="IPR036869">
    <property type="entry name" value="J_dom_sf"/>
</dbReference>
<dbReference type="PANTHER" id="PTHR43096">
    <property type="entry name" value="DNAJ HOMOLOG 1, MITOCHONDRIAL-RELATED"/>
    <property type="match status" value="1"/>
</dbReference>
<dbReference type="PANTHER" id="PTHR43096:SF52">
    <property type="entry name" value="DNAJ HOMOLOG 1, MITOCHONDRIAL-RELATED"/>
    <property type="match status" value="1"/>
</dbReference>
<dbReference type="Pfam" id="PF00226">
    <property type="entry name" value="DnaJ"/>
    <property type="match status" value="1"/>
</dbReference>
<dbReference type="Pfam" id="PF01556">
    <property type="entry name" value="DnaJ_C"/>
    <property type="match status" value="1"/>
</dbReference>
<dbReference type="PRINTS" id="PR00625">
    <property type="entry name" value="JDOMAIN"/>
</dbReference>
<dbReference type="SMART" id="SM00271">
    <property type="entry name" value="DnaJ"/>
    <property type="match status" value="1"/>
</dbReference>
<dbReference type="SUPFAM" id="SSF46565">
    <property type="entry name" value="Chaperone J-domain"/>
    <property type="match status" value="1"/>
</dbReference>
<dbReference type="SUPFAM" id="SSF49493">
    <property type="entry name" value="HSP40/DnaJ peptide-binding domain"/>
    <property type="match status" value="2"/>
</dbReference>
<dbReference type="PROSITE" id="PS00636">
    <property type="entry name" value="DNAJ_1"/>
    <property type="match status" value="1"/>
</dbReference>
<dbReference type="PROSITE" id="PS50076">
    <property type="entry name" value="DNAJ_2"/>
    <property type="match status" value="1"/>
</dbReference>
<gene>
    <name type="primary">dnaJ</name>
    <name type="ordered locus">Synpcc7942_2579</name>
</gene>
<comment type="function">
    <text evidence="1">Participates actively in the response to hyperosmotic and heat shock by preventing the aggregation of stress-denatured proteins and by disaggregating proteins, also in an autonomous, DnaK-independent fashion. Unfolded proteins bind initially to DnaJ; upon interaction with the DnaJ-bound protein, DnaK hydrolyzes its bound ATP, resulting in the formation of a stable complex. GrpE releases ADP from DnaK; ATP binding to DnaK triggers the release of the substrate protein, thus completing the reaction cycle. Several rounds of ATP-dependent interactions between DnaJ, DnaK and GrpE are required for fully efficient folding. Also involved, together with DnaK and GrpE, in the DNA replication of plasmids through activation of initiation proteins (By similarity).</text>
</comment>
<comment type="cofactor">
    <cofactor evidence="1">
        <name>Zn(2+)</name>
        <dbReference type="ChEBI" id="CHEBI:29105"/>
    </cofactor>
    <text evidence="1">Binds 2 Zn(2+) ions per monomer.</text>
</comment>
<comment type="subunit">
    <text evidence="1">Homodimer.</text>
</comment>
<comment type="subcellular location">
    <subcellularLocation>
        <location evidence="1">Cytoplasm</location>
    </subcellularLocation>
</comment>
<comment type="domain">
    <text evidence="1">The J domain is necessary and sufficient to stimulate DnaK ATPase activity. Zinc center 1 plays an important role in the autonomous, DnaK-independent chaperone activity of DnaJ. Zinc center 2 is essential for interaction with DnaK and for DnaJ activity (By similarity).</text>
</comment>
<comment type="similarity">
    <text evidence="4">Belongs to the DnaJ family.</text>
</comment>
<comment type="sequence caution" evidence="4">
    <conflict type="erroneous initiation">
        <sequence resource="EMBL-CDS" id="ABB58609"/>
    </conflict>
</comment>
<evidence type="ECO:0000250" key="1"/>
<evidence type="ECO:0000255" key="2">
    <source>
        <dbReference type="PROSITE-ProRule" id="PRU00286"/>
    </source>
</evidence>
<evidence type="ECO:0000256" key="3">
    <source>
        <dbReference type="SAM" id="MobiDB-lite"/>
    </source>
</evidence>
<evidence type="ECO:0000305" key="4"/>